<gene>
    <name type="primary">OPR2</name>
</gene>
<comment type="function">
    <text evidence="1">May be involved in the biosynthesis or metabolism of oxylipin signaling molecules.</text>
</comment>
<comment type="cofactor">
    <cofactor evidence="1">
        <name>FMN</name>
        <dbReference type="ChEBI" id="CHEBI:58210"/>
    </cofactor>
</comment>
<comment type="subcellular location">
    <subcellularLocation>
        <location evidence="2">Cytoplasm</location>
    </subcellularLocation>
</comment>
<comment type="tissue specificity">
    <text evidence="2">Weakly expressed in flowers and roots.</text>
</comment>
<comment type="induction">
    <text>Seems to not be influenced by wounding.</text>
</comment>
<comment type="similarity">
    <text evidence="3">Belongs to the NADH:flavin oxidoreductase/NADH oxidase family.</text>
</comment>
<comment type="caution">
    <text evidence="3">Was named OAX2 but it does correspond to Arabidopsis OAX2 protein.</text>
</comment>
<comment type="caution">
    <text evidence="3">According to PubMed:12445129, no association with a flavin cofactor is detected. Does not reduce 12-oxophytodienoic acid (OPDA) nor any other alpha,beta-unsaturated carbonyl tested.</text>
</comment>
<feature type="chain" id="PRO_0000194490" description="12-oxophytodienoate reductase-like protein">
    <location>
        <begin position="1"/>
        <end position="355"/>
    </location>
</feature>
<feature type="active site" description="Proton donor" evidence="1">
    <location>
        <position position="181"/>
    </location>
</feature>
<feature type="binding site" evidence="1">
    <location>
        <begin position="30"/>
        <end position="32"/>
    </location>
    <ligand>
        <name>FMN</name>
        <dbReference type="ChEBI" id="CHEBI:58210"/>
    </ligand>
</feature>
<feature type="binding site" evidence="1">
    <location>
        <position position="63"/>
    </location>
    <ligand>
        <name>FMN</name>
        <dbReference type="ChEBI" id="CHEBI:58210"/>
    </ligand>
</feature>
<feature type="binding site" evidence="1">
    <location>
        <position position="105"/>
    </location>
    <ligand>
        <name>FMN</name>
        <dbReference type="ChEBI" id="CHEBI:58210"/>
    </ligand>
</feature>
<feature type="binding site" evidence="1">
    <location>
        <begin position="175"/>
        <end position="178"/>
    </location>
    <ligand>
        <name>substrate</name>
    </ligand>
</feature>
<feature type="binding site" evidence="1">
    <location>
        <position position="265"/>
    </location>
    <ligand>
        <name>substrate</name>
    </ligand>
</feature>
<feature type="binding site" evidence="1">
    <location>
        <position position="288"/>
    </location>
    <ligand>
        <name>FMN</name>
        <dbReference type="ChEBI" id="CHEBI:58210"/>
    </ligand>
</feature>
<feature type="binding site" evidence="1">
    <location>
        <begin position="309"/>
        <end position="310"/>
    </location>
    <ligand>
        <name>FMN</name>
        <dbReference type="ChEBI" id="CHEBI:58210"/>
    </ligand>
</feature>
<keyword id="KW-0963">Cytoplasm</keyword>
<keyword id="KW-0285">Flavoprotein</keyword>
<keyword id="KW-0288">FMN</keyword>
<keyword id="KW-0521">NADP</keyword>
<keyword id="KW-0560">Oxidoreductase</keyword>
<keyword id="KW-1185">Reference proteome</keyword>
<name>OPRL_SOLLC</name>
<reference key="1">
    <citation type="journal article" date="2002" name="Plant J.">
        <title>Characterization and cDNA-microarray expression analysis of 12-oxophytodienoate reductases reveals differential roles for octadecanoid biosynthesis in the local versus the systemic wound response.</title>
        <authorList>
            <person name="Strassner J."/>
            <person name="Schaller F."/>
            <person name="Frick U.B."/>
            <person name="Howe G.A."/>
            <person name="Weiler E.W."/>
            <person name="Amrhein N."/>
            <person name="Macheroux P."/>
            <person name="Schaller A."/>
        </authorList>
    </citation>
    <scope>NUCLEOTIDE SEQUENCE [MRNA]</scope>
    <scope>TISSUE SPECIFICITY</scope>
    <scope>SUBCELLULAR LOCATION</scope>
    <source>
        <strain>cv. Castlemart II</strain>
        <tissue>Shoot</tissue>
    </source>
</reference>
<accession>Q9FEX0</accession>
<proteinExistence type="evidence at transcript level"/>
<protein>
    <recommendedName>
        <fullName>12-oxophytodienoate reductase-like protein</fullName>
        <ecNumber>1.3.1.-</ecNumber>
    </recommendedName>
    <alternativeName>
        <fullName>LeOPR2</fullName>
    </alternativeName>
</protein>
<evidence type="ECO:0000250" key="1"/>
<evidence type="ECO:0000269" key="2">
    <source>
    </source>
</evidence>
<evidence type="ECO:0000305" key="3"/>
<dbReference type="EC" id="1.3.1.-"/>
<dbReference type="EMBL" id="AJ278331">
    <property type="protein sequence ID" value="CAC21423.1"/>
    <property type="molecule type" value="mRNA"/>
</dbReference>
<dbReference type="RefSeq" id="NP_001233868.2">
    <property type="nucleotide sequence ID" value="NM_001246939.3"/>
</dbReference>
<dbReference type="SMR" id="Q9FEX0"/>
<dbReference type="STRING" id="4081.Q9FEX0"/>
<dbReference type="PaxDb" id="4081-Solyc01g103390.2.1"/>
<dbReference type="GeneID" id="543762"/>
<dbReference type="KEGG" id="sly:543762"/>
<dbReference type="eggNOG" id="KOG0134">
    <property type="taxonomic scope" value="Eukaryota"/>
</dbReference>
<dbReference type="InParanoid" id="Q9FEX0"/>
<dbReference type="OrthoDB" id="276546at2759"/>
<dbReference type="BRENDA" id="1.3.1.42">
    <property type="organism ID" value="3101"/>
</dbReference>
<dbReference type="Proteomes" id="UP000004994">
    <property type="component" value="Unplaced"/>
</dbReference>
<dbReference type="ExpressionAtlas" id="Q9FEX0">
    <property type="expression patterns" value="baseline and differential"/>
</dbReference>
<dbReference type="GO" id="GO:0005737">
    <property type="term" value="C:cytoplasm"/>
    <property type="evidence" value="ECO:0007669"/>
    <property type="project" value="UniProtKB-SubCell"/>
</dbReference>
<dbReference type="GO" id="GO:0010181">
    <property type="term" value="F:FMN binding"/>
    <property type="evidence" value="ECO:0007669"/>
    <property type="project" value="InterPro"/>
</dbReference>
<dbReference type="GO" id="GO:0016491">
    <property type="term" value="F:oxidoreductase activity"/>
    <property type="evidence" value="ECO:0000318"/>
    <property type="project" value="GO_Central"/>
</dbReference>
<dbReference type="CDD" id="cd02933">
    <property type="entry name" value="OYE_like_FMN"/>
    <property type="match status" value="1"/>
</dbReference>
<dbReference type="FunFam" id="3.20.20.70:FF:000397">
    <property type="entry name" value="Putative 12-oxophytodienoate reductase-like protein 2A"/>
    <property type="match status" value="1"/>
</dbReference>
<dbReference type="Gene3D" id="3.20.20.70">
    <property type="entry name" value="Aldolase class I"/>
    <property type="match status" value="1"/>
</dbReference>
<dbReference type="InterPro" id="IPR013785">
    <property type="entry name" value="Aldolase_TIM"/>
</dbReference>
<dbReference type="InterPro" id="IPR001155">
    <property type="entry name" value="OxRdtase_FMN_N"/>
</dbReference>
<dbReference type="InterPro" id="IPR045247">
    <property type="entry name" value="Oye-like"/>
</dbReference>
<dbReference type="PANTHER" id="PTHR22893:SF137">
    <property type="entry name" value="12-OXOPHYTODIENOATE REDUCTASE-LIKE PROTEIN"/>
    <property type="match status" value="1"/>
</dbReference>
<dbReference type="PANTHER" id="PTHR22893">
    <property type="entry name" value="NADH OXIDOREDUCTASE-RELATED"/>
    <property type="match status" value="1"/>
</dbReference>
<dbReference type="Pfam" id="PF00724">
    <property type="entry name" value="Oxidored_FMN"/>
    <property type="match status" value="1"/>
</dbReference>
<dbReference type="SUPFAM" id="SSF51395">
    <property type="entry name" value="FMN-linked oxidoreductases"/>
    <property type="match status" value="1"/>
</dbReference>
<sequence>MEANSNSAVPLCTPYKLGRFKLTHRIVFPALTRNRSQNNTPQSHLTEYYSQRATNGGLIISEAAAASDISKECPNLPGIWNEEQVEAWKPVVNGVHEKGGVFFCQIWHSGRLSVPTVSALFFSIGIGWSTRPDDKVYAKPTPLPLESDKIPCIVNDFRIAARNAIKAGFDGIEINASSGGYLIDEFMNDQVHGWTDEYDESIKDRCRLALEIVEAVANEIGADKIGIKLSPFDGKKDSNSEALATYMANELSKLGVLYLHVMEPRETVNRSLLPIRKAFKGTLIASGGYGKSDGEKAIDENYADLISFGRMFLANPDLPKRFEVNAPLNKYNRSTFYTNDPIIGYTDYPFLEVAS</sequence>
<organism>
    <name type="scientific">Solanum lycopersicum</name>
    <name type="common">Tomato</name>
    <name type="synonym">Lycopersicon esculentum</name>
    <dbReference type="NCBI Taxonomy" id="4081"/>
    <lineage>
        <taxon>Eukaryota</taxon>
        <taxon>Viridiplantae</taxon>
        <taxon>Streptophyta</taxon>
        <taxon>Embryophyta</taxon>
        <taxon>Tracheophyta</taxon>
        <taxon>Spermatophyta</taxon>
        <taxon>Magnoliopsida</taxon>
        <taxon>eudicotyledons</taxon>
        <taxon>Gunneridae</taxon>
        <taxon>Pentapetalae</taxon>
        <taxon>asterids</taxon>
        <taxon>lamiids</taxon>
        <taxon>Solanales</taxon>
        <taxon>Solanaceae</taxon>
        <taxon>Solanoideae</taxon>
        <taxon>Solaneae</taxon>
        <taxon>Solanum</taxon>
        <taxon>Solanum subgen. Lycopersicon</taxon>
    </lineage>
</organism>